<organism>
    <name type="scientific">Chlamydia caviae (strain ATCC VR-813 / DSM 19441 / 03DC25 / GPIC)</name>
    <name type="common">Chlamydophila caviae</name>
    <dbReference type="NCBI Taxonomy" id="227941"/>
    <lineage>
        <taxon>Bacteria</taxon>
        <taxon>Pseudomonadati</taxon>
        <taxon>Chlamydiota</taxon>
        <taxon>Chlamydiia</taxon>
        <taxon>Chlamydiales</taxon>
        <taxon>Chlamydiaceae</taxon>
        <taxon>Chlamydia/Chlamydophila group</taxon>
        <taxon>Chlamydia</taxon>
    </lineage>
</organism>
<feature type="chain" id="PRO_0000170378" description="Nucleoid-associated protein CCA_00330">
    <location>
        <begin position="1"/>
        <end position="96"/>
    </location>
</feature>
<sequence length="96" mass="10735">MGSGYAKKKKEAKIMEQQFLEMEASLEQKRYEGQAGNGLVSVVINGKCDIVSIKVQPTCLDPEEPEVVEDLFRSAFKEAKEAMDKEMSVMRAGMPF</sequence>
<proteinExistence type="inferred from homology"/>
<dbReference type="EMBL" id="AE015925">
    <property type="protein sequence ID" value="AAP05078.1"/>
    <property type="molecule type" value="Genomic_DNA"/>
</dbReference>
<dbReference type="RefSeq" id="WP_011006295.1">
    <property type="nucleotide sequence ID" value="NC_003361.3"/>
</dbReference>
<dbReference type="SMR" id="Q823S6"/>
<dbReference type="STRING" id="227941.CCA_00330"/>
<dbReference type="KEGG" id="cca:CCA_00330"/>
<dbReference type="eggNOG" id="COG0718">
    <property type="taxonomic scope" value="Bacteria"/>
</dbReference>
<dbReference type="HOGENOM" id="CLU_140930_2_2_0"/>
<dbReference type="OrthoDB" id="19046at2"/>
<dbReference type="Proteomes" id="UP000002193">
    <property type="component" value="Chromosome"/>
</dbReference>
<dbReference type="GO" id="GO:0043590">
    <property type="term" value="C:bacterial nucleoid"/>
    <property type="evidence" value="ECO:0007669"/>
    <property type="project" value="UniProtKB-UniRule"/>
</dbReference>
<dbReference type="GO" id="GO:0005829">
    <property type="term" value="C:cytosol"/>
    <property type="evidence" value="ECO:0007669"/>
    <property type="project" value="TreeGrafter"/>
</dbReference>
<dbReference type="GO" id="GO:0003677">
    <property type="term" value="F:DNA binding"/>
    <property type="evidence" value="ECO:0007669"/>
    <property type="project" value="UniProtKB-UniRule"/>
</dbReference>
<dbReference type="Gene3D" id="3.30.1310.10">
    <property type="entry name" value="Nucleoid-associated protein YbaB-like domain"/>
    <property type="match status" value="1"/>
</dbReference>
<dbReference type="HAMAP" id="MF_00274">
    <property type="entry name" value="DNA_YbaB_EbfC"/>
    <property type="match status" value="1"/>
</dbReference>
<dbReference type="InterPro" id="IPR036894">
    <property type="entry name" value="YbaB-like_sf"/>
</dbReference>
<dbReference type="InterPro" id="IPR004401">
    <property type="entry name" value="YbaB/EbfC"/>
</dbReference>
<dbReference type="NCBIfam" id="TIGR00103">
    <property type="entry name" value="DNA_YbaB_EbfC"/>
    <property type="match status" value="1"/>
</dbReference>
<dbReference type="PANTHER" id="PTHR33449">
    <property type="entry name" value="NUCLEOID-ASSOCIATED PROTEIN YBAB"/>
    <property type="match status" value="1"/>
</dbReference>
<dbReference type="PANTHER" id="PTHR33449:SF1">
    <property type="entry name" value="NUCLEOID-ASSOCIATED PROTEIN YBAB"/>
    <property type="match status" value="1"/>
</dbReference>
<dbReference type="Pfam" id="PF02575">
    <property type="entry name" value="YbaB_DNA_bd"/>
    <property type="match status" value="1"/>
</dbReference>
<dbReference type="PIRSF" id="PIRSF004555">
    <property type="entry name" value="UCP004555"/>
    <property type="match status" value="1"/>
</dbReference>
<dbReference type="SUPFAM" id="SSF82607">
    <property type="entry name" value="YbaB-like"/>
    <property type="match status" value="1"/>
</dbReference>
<evidence type="ECO:0000255" key="1">
    <source>
        <dbReference type="HAMAP-Rule" id="MF_00274"/>
    </source>
</evidence>
<gene>
    <name type="ordered locus">CCA_00330</name>
</gene>
<keyword id="KW-0963">Cytoplasm</keyword>
<keyword id="KW-0238">DNA-binding</keyword>
<name>Y330_CHLCV</name>
<accession>Q823S6</accession>
<comment type="function">
    <text evidence="1">Binds to DNA and alters its conformation. May be involved in regulation of gene expression, nucleoid organization and DNA protection.</text>
</comment>
<comment type="subunit">
    <text evidence="1">Homodimer.</text>
</comment>
<comment type="subcellular location">
    <subcellularLocation>
        <location evidence="1">Cytoplasm</location>
        <location evidence="1">Nucleoid</location>
    </subcellularLocation>
</comment>
<comment type="similarity">
    <text evidence="1">Belongs to the YbaB/EbfC family.</text>
</comment>
<reference key="1">
    <citation type="journal article" date="2003" name="Nucleic Acids Res.">
        <title>Genome sequence of Chlamydophila caviae (Chlamydia psittaci GPIC): examining the role of niche-specific genes in the evolution of the Chlamydiaceae.</title>
        <authorList>
            <person name="Read T.D."/>
            <person name="Myers G.S.A."/>
            <person name="Brunham R.C."/>
            <person name="Nelson W.C."/>
            <person name="Paulsen I.T."/>
            <person name="Heidelberg J.F."/>
            <person name="Holtzapple E.K."/>
            <person name="Khouri H.M."/>
            <person name="Federova N.B."/>
            <person name="Carty H.A."/>
            <person name="Umayam L.A."/>
            <person name="Haft D.H."/>
            <person name="Peterson J.D."/>
            <person name="Beanan M.J."/>
            <person name="White O."/>
            <person name="Salzberg S.L."/>
            <person name="Hsia R.-C."/>
            <person name="McClarty G."/>
            <person name="Rank R.G."/>
            <person name="Bavoil P.M."/>
            <person name="Fraser C.M."/>
        </authorList>
    </citation>
    <scope>NUCLEOTIDE SEQUENCE [LARGE SCALE GENOMIC DNA]</scope>
    <source>
        <strain>ATCC VR-813 / DSM 19441 / 03DC25 / GPIC</strain>
    </source>
</reference>
<protein>
    <recommendedName>
        <fullName evidence="1">Nucleoid-associated protein CCA_00330</fullName>
    </recommendedName>
</protein>